<gene>
    <name evidence="1" type="primary">rps13</name>
</gene>
<evidence type="ECO:0000255" key="1">
    <source>
        <dbReference type="HAMAP-Rule" id="MF_01315"/>
    </source>
</evidence>
<evidence type="ECO:0000256" key="2">
    <source>
        <dbReference type="SAM" id="MobiDB-lite"/>
    </source>
</evidence>
<evidence type="ECO:0000305" key="3"/>
<protein>
    <recommendedName>
        <fullName evidence="1">Small ribosomal subunit protein uS13c</fullName>
    </recommendedName>
    <alternativeName>
        <fullName evidence="3">30S ribosomal protein S13, chloroplastic</fullName>
    </alternativeName>
</protein>
<sequence length="123" mass="14059">MVRLIGVDLPRNKRIAYALTYIHGIGITSARKIIELAEISPETRTDDLTTEQTIALRDQLESIDLNLEGDLRCFNGLNIKRLNEINCHRGKRHRNNLPVRGQRTRTNARSRRGSKKTVTGKKK</sequence>
<keyword id="KW-0150">Chloroplast</keyword>
<keyword id="KW-0934">Plastid</keyword>
<keyword id="KW-0687">Ribonucleoprotein</keyword>
<keyword id="KW-0689">Ribosomal protein</keyword>
<keyword id="KW-0694">RNA-binding</keyword>
<keyword id="KW-0699">rRNA-binding</keyword>
<geneLocation type="chloroplast"/>
<accession>P49501</accession>
<name>RR13_TRICV</name>
<feature type="chain" id="PRO_0000132200" description="Small ribosomal subunit protein uS13c">
    <location>
        <begin position="1"/>
        <end position="123"/>
    </location>
</feature>
<feature type="region of interest" description="Disordered" evidence="2">
    <location>
        <begin position="90"/>
        <end position="123"/>
    </location>
</feature>
<feature type="compositionally biased region" description="Basic residues" evidence="2">
    <location>
        <begin position="102"/>
        <end position="123"/>
    </location>
</feature>
<reference key="1">
    <citation type="journal article" date="1995" name="Plant Mol. Biol. Rep.">
        <title>The chloroplast genome of a chlorophyll a+c-containing alga, Odontella sinensis.</title>
        <authorList>
            <person name="Kowallik K.V."/>
            <person name="Stoebe B."/>
            <person name="Schaffran I."/>
            <person name="Kroth-Pancic P."/>
            <person name="Freier U."/>
        </authorList>
    </citation>
    <scope>NUCLEOTIDE SEQUENCE [LARGE SCALE GENOMIC DNA]</scope>
</reference>
<comment type="function">
    <text evidence="1">Located at the top of the head of the 30S subunit, it contacts several helices of the 16S rRNA.</text>
</comment>
<comment type="subunit">
    <text>Part of the 30S ribosomal subunit.</text>
</comment>
<comment type="subcellular location">
    <subcellularLocation>
        <location>Plastid</location>
        <location>Chloroplast</location>
    </subcellularLocation>
</comment>
<comment type="similarity">
    <text evidence="1">Belongs to the universal ribosomal protein uS13 family.</text>
</comment>
<proteinExistence type="inferred from homology"/>
<organism>
    <name type="scientific">Trieres chinensis</name>
    <name type="common">Marine centric diatom</name>
    <name type="synonym">Odontella sinensis</name>
    <dbReference type="NCBI Taxonomy" id="1514140"/>
    <lineage>
        <taxon>Eukaryota</taxon>
        <taxon>Sar</taxon>
        <taxon>Stramenopiles</taxon>
        <taxon>Ochrophyta</taxon>
        <taxon>Bacillariophyta</taxon>
        <taxon>Mediophyceae</taxon>
        <taxon>Biddulphiophycidae</taxon>
        <taxon>Eupodiscales</taxon>
        <taxon>Parodontellaceae</taxon>
        <taxon>Trieres</taxon>
    </lineage>
</organism>
<dbReference type="EMBL" id="Z67753">
    <property type="protein sequence ID" value="CAA91629.2"/>
    <property type="molecule type" value="Genomic_DNA"/>
</dbReference>
<dbReference type="PIR" id="S78256">
    <property type="entry name" value="S78256"/>
</dbReference>
<dbReference type="SMR" id="P49501"/>
<dbReference type="GO" id="GO:0009507">
    <property type="term" value="C:chloroplast"/>
    <property type="evidence" value="ECO:0007669"/>
    <property type="project" value="UniProtKB-SubCell"/>
</dbReference>
<dbReference type="GO" id="GO:0005739">
    <property type="term" value="C:mitochondrion"/>
    <property type="evidence" value="ECO:0007669"/>
    <property type="project" value="TreeGrafter"/>
</dbReference>
<dbReference type="GO" id="GO:0015935">
    <property type="term" value="C:small ribosomal subunit"/>
    <property type="evidence" value="ECO:0007669"/>
    <property type="project" value="TreeGrafter"/>
</dbReference>
<dbReference type="GO" id="GO:0019843">
    <property type="term" value="F:rRNA binding"/>
    <property type="evidence" value="ECO:0007669"/>
    <property type="project" value="UniProtKB-UniRule"/>
</dbReference>
<dbReference type="GO" id="GO:0003735">
    <property type="term" value="F:structural constituent of ribosome"/>
    <property type="evidence" value="ECO:0007669"/>
    <property type="project" value="InterPro"/>
</dbReference>
<dbReference type="GO" id="GO:0006412">
    <property type="term" value="P:translation"/>
    <property type="evidence" value="ECO:0007669"/>
    <property type="project" value="UniProtKB-UniRule"/>
</dbReference>
<dbReference type="FunFam" id="1.10.8.50:FF:000001">
    <property type="entry name" value="30S ribosomal protein S13"/>
    <property type="match status" value="1"/>
</dbReference>
<dbReference type="FunFam" id="4.10.910.10:FF:000005">
    <property type="entry name" value="30S ribosomal protein S13, chloroplastic"/>
    <property type="match status" value="1"/>
</dbReference>
<dbReference type="Gene3D" id="1.10.8.50">
    <property type="match status" value="1"/>
</dbReference>
<dbReference type="Gene3D" id="4.10.910.10">
    <property type="entry name" value="30s ribosomal protein s13, domain 2"/>
    <property type="match status" value="1"/>
</dbReference>
<dbReference type="HAMAP" id="MF_01315">
    <property type="entry name" value="Ribosomal_uS13"/>
    <property type="match status" value="1"/>
</dbReference>
<dbReference type="InterPro" id="IPR027437">
    <property type="entry name" value="Rbsml_uS13_C"/>
</dbReference>
<dbReference type="InterPro" id="IPR001892">
    <property type="entry name" value="Ribosomal_uS13"/>
</dbReference>
<dbReference type="InterPro" id="IPR010979">
    <property type="entry name" value="Ribosomal_uS13-like_H2TH"/>
</dbReference>
<dbReference type="InterPro" id="IPR019980">
    <property type="entry name" value="Ribosomal_uS13_bac-type"/>
</dbReference>
<dbReference type="InterPro" id="IPR018269">
    <property type="entry name" value="Ribosomal_uS13_CS"/>
</dbReference>
<dbReference type="NCBIfam" id="TIGR03631">
    <property type="entry name" value="uS13_bact"/>
    <property type="match status" value="1"/>
</dbReference>
<dbReference type="PANTHER" id="PTHR10871">
    <property type="entry name" value="30S RIBOSOMAL PROTEIN S13/40S RIBOSOMAL PROTEIN S18"/>
    <property type="match status" value="1"/>
</dbReference>
<dbReference type="PANTHER" id="PTHR10871:SF1">
    <property type="entry name" value="SMALL RIBOSOMAL SUBUNIT PROTEIN US13M"/>
    <property type="match status" value="1"/>
</dbReference>
<dbReference type="Pfam" id="PF00416">
    <property type="entry name" value="Ribosomal_S13"/>
    <property type="match status" value="1"/>
</dbReference>
<dbReference type="PIRSF" id="PIRSF002134">
    <property type="entry name" value="Ribosomal_S13"/>
    <property type="match status" value="1"/>
</dbReference>
<dbReference type="SUPFAM" id="SSF46946">
    <property type="entry name" value="S13-like H2TH domain"/>
    <property type="match status" value="1"/>
</dbReference>
<dbReference type="PROSITE" id="PS00646">
    <property type="entry name" value="RIBOSOMAL_S13_1"/>
    <property type="match status" value="1"/>
</dbReference>
<dbReference type="PROSITE" id="PS50159">
    <property type="entry name" value="RIBOSOMAL_S13_2"/>
    <property type="match status" value="1"/>
</dbReference>